<feature type="chain" id="PRO_0000082946" description="Methionyl-tRNA formyltransferase">
    <location>
        <begin position="1"/>
        <end position="314"/>
    </location>
</feature>
<feature type="binding site" evidence="1">
    <location>
        <begin position="113"/>
        <end position="116"/>
    </location>
    <ligand>
        <name>(6S)-5,6,7,8-tetrahydrofolate</name>
        <dbReference type="ChEBI" id="CHEBI:57453"/>
    </ligand>
</feature>
<gene>
    <name evidence="1" type="primary">fmt</name>
    <name type="ordered locus">CT1453</name>
</gene>
<accession>Q8KCG8</accession>
<organism>
    <name type="scientific">Chlorobaculum tepidum (strain ATCC 49652 / DSM 12025 / NBRC 103806 / TLS)</name>
    <name type="common">Chlorobium tepidum</name>
    <dbReference type="NCBI Taxonomy" id="194439"/>
    <lineage>
        <taxon>Bacteria</taxon>
        <taxon>Pseudomonadati</taxon>
        <taxon>Chlorobiota</taxon>
        <taxon>Chlorobiia</taxon>
        <taxon>Chlorobiales</taxon>
        <taxon>Chlorobiaceae</taxon>
        <taxon>Chlorobaculum</taxon>
    </lineage>
</organism>
<dbReference type="EC" id="2.1.2.9" evidence="1"/>
<dbReference type="EMBL" id="AE006470">
    <property type="protein sequence ID" value="AAM72681.1"/>
    <property type="molecule type" value="Genomic_DNA"/>
</dbReference>
<dbReference type="RefSeq" id="NP_662339.1">
    <property type="nucleotide sequence ID" value="NC_002932.3"/>
</dbReference>
<dbReference type="SMR" id="Q8KCG8"/>
<dbReference type="STRING" id="194439.CT1453"/>
<dbReference type="EnsemblBacteria" id="AAM72681">
    <property type="protein sequence ID" value="AAM72681"/>
    <property type="gene ID" value="CT1453"/>
</dbReference>
<dbReference type="KEGG" id="cte:CT1453"/>
<dbReference type="PATRIC" id="fig|194439.7.peg.1318"/>
<dbReference type="eggNOG" id="COG0223">
    <property type="taxonomic scope" value="Bacteria"/>
</dbReference>
<dbReference type="HOGENOM" id="CLU_033347_1_1_10"/>
<dbReference type="OrthoDB" id="9802815at2"/>
<dbReference type="Proteomes" id="UP000001007">
    <property type="component" value="Chromosome"/>
</dbReference>
<dbReference type="GO" id="GO:0005829">
    <property type="term" value="C:cytosol"/>
    <property type="evidence" value="ECO:0007669"/>
    <property type="project" value="TreeGrafter"/>
</dbReference>
<dbReference type="GO" id="GO:0004479">
    <property type="term" value="F:methionyl-tRNA formyltransferase activity"/>
    <property type="evidence" value="ECO:0007669"/>
    <property type="project" value="UniProtKB-UniRule"/>
</dbReference>
<dbReference type="CDD" id="cd08646">
    <property type="entry name" value="FMT_core_Met-tRNA-FMT_N"/>
    <property type="match status" value="1"/>
</dbReference>
<dbReference type="CDD" id="cd08704">
    <property type="entry name" value="Met_tRNA_FMT_C"/>
    <property type="match status" value="1"/>
</dbReference>
<dbReference type="Gene3D" id="3.40.50.12230">
    <property type="match status" value="1"/>
</dbReference>
<dbReference type="HAMAP" id="MF_00182">
    <property type="entry name" value="Formyl_trans"/>
    <property type="match status" value="1"/>
</dbReference>
<dbReference type="InterPro" id="IPR005794">
    <property type="entry name" value="Fmt"/>
</dbReference>
<dbReference type="InterPro" id="IPR005793">
    <property type="entry name" value="Formyl_trans_C"/>
</dbReference>
<dbReference type="InterPro" id="IPR002376">
    <property type="entry name" value="Formyl_transf_N"/>
</dbReference>
<dbReference type="InterPro" id="IPR036477">
    <property type="entry name" value="Formyl_transf_N_sf"/>
</dbReference>
<dbReference type="InterPro" id="IPR011034">
    <property type="entry name" value="Formyl_transferase-like_C_sf"/>
</dbReference>
<dbReference type="InterPro" id="IPR044135">
    <property type="entry name" value="Met-tRNA-FMT_C"/>
</dbReference>
<dbReference type="InterPro" id="IPR041711">
    <property type="entry name" value="Met-tRNA-FMT_N"/>
</dbReference>
<dbReference type="NCBIfam" id="TIGR00460">
    <property type="entry name" value="fmt"/>
    <property type="match status" value="1"/>
</dbReference>
<dbReference type="PANTHER" id="PTHR11138">
    <property type="entry name" value="METHIONYL-TRNA FORMYLTRANSFERASE"/>
    <property type="match status" value="1"/>
</dbReference>
<dbReference type="PANTHER" id="PTHR11138:SF5">
    <property type="entry name" value="METHIONYL-TRNA FORMYLTRANSFERASE, MITOCHONDRIAL"/>
    <property type="match status" value="1"/>
</dbReference>
<dbReference type="Pfam" id="PF02911">
    <property type="entry name" value="Formyl_trans_C"/>
    <property type="match status" value="1"/>
</dbReference>
<dbReference type="Pfam" id="PF00551">
    <property type="entry name" value="Formyl_trans_N"/>
    <property type="match status" value="1"/>
</dbReference>
<dbReference type="SUPFAM" id="SSF50486">
    <property type="entry name" value="FMT C-terminal domain-like"/>
    <property type="match status" value="1"/>
</dbReference>
<dbReference type="SUPFAM" id="SSF53328">
    <property type="entry name" value="Formyltransferase"/>
    <property type="match status" value="1"/>
</dbReference>
<name>FMT_CHLTE</name>
<evidence type="ECO:0000255" key="1">
    <source>
        <dbReference type="HAMAP-Rule" id="MF_00182"/>
    </source>
</evidence>
<reference key="1">
    <citation type="journal article" date="2002" name="Proc. Natl. Acad. Sci. U.S.A.">
        <title>The complete genome sequence of Chlorobium tepidum TLS, a photosynthetic, anaerobic, green-sulfur bacterium.</title>
        <authorList>
            <person name="Eisen J.A."/>
            <person name="Nelson K.E."/>
            <person name="Paulsen I.T."/>
            <person name="Heidelberg J.F."/>
            <person name="Wu M."/>
            <person name="Dodson R.J."/>
            <person name="DeBoy R.T."/>
            <person name="Gwinn M.L."/>
            <person name="Nelson W.C."/>
            <person name="Haft D.H."/>
            <person name="Hickey E.K."/>
            <person name="Peterson J.D."/>
            <person name="Durkin A.S."/>
            <person name="Kolonay J.F."/>
            <person name="Yang F."/>
            <person name="Holt I.E."/>
            <person name="Umayam L.A."/>
            <person name="Mason T.M."/>
            <person name="Brenner M."/>
            <person name="Shea T.P."/>
            <person name="Parksey D.S."/>
            <person name="Nierman W.C."/>
            <person name="Feldblyum T.V."/>
            <person name="Hansen C.L."/>
            <person name="Craven M.B."/>
            <person name="Radune D."/>
            <person name="Vamathevan J.J."/>
            <person name="Khouri H.M."/>
            <person name="White O."/>
            <person name="Gruber T.M."/>
            <person name="Ketchum K.A."/>
            <person name="Venter J.C."/>
            <person name="Tettelin H."/>
            <person name="Bryant D.A."/>
            <person name="Fraser C.M."/>
        </authorList>
    </citation>
    <scope>NUCLEOTIDE SEQUENCE [LARGE SCALE GENOMIC DNA]</scope>
    <source>
        <strain>ATCC 49652 / DSM 12025 / NBRC 103806 / TLS</strain>
    </source>
</reference>
<keyword id="KW-0648">Protein biosynthesis</keyword>
<keyword id="KW-1185">Reference proteome</keyword>
<keyword id="KW-0808">Transferase</keyword>
<sequence length="314" mass="34244">MGLRVVFMGTPEFAVPSLRRIAAMKPQFETVLVVTGCDKPRRSKNSPPEPTPVKQAALELGLPVLEADDVSSHEFALQVAAARPDVIVVAAFRVLPPEVLELPPLGTFNLHGSLLPAYRGAAPVNWAIINGDAETGVTTFFLQKSVDTGNIITMDRTPIGPDENAFELLKRLSEIGAGTVERTLTMIADGAVMPEKQDERFATKAPKLNRENTRIDWNQPVQRLHDFIRGLALKPAAWTTFGGKSLKIYKAKACAIETAPDEPGTLRIADGRLLVAGTDGWIELLSVQAEGKKAMDGELFARGLRARKEMLRFL</sequence>
<proteinExistence type="inferred from homology"/>
<comment type="function">
    <text evidence="1">Attaches a formyl group to the free amino group of methionyl-tRNA(fMet). The formyl group appears to play a dual role in the initiator identity of N-formylmethionyl-tRNA by promoting its recognition by IF2 and preventing the misappropriation of this tRNA by the elongation apparatus.</text>
</comment>
<comment type="catalytic activity">
    <reaction evidence="1">
        <text>L-methionyl-tRNA(fMet) + (6R)-10-formyltetrahydrofolate = N-formyl-L-methionyl-tRNA(fMet) + (6S)-5,6,7,8-tetrahydrofolate + H(+)</text>
        <dbReference type="Rhea" id="RHEA:24380"/>
        <dbReference type="Rhea" id="RHEA-COMP:9952"/>
        <dbReference type="Rhea" id="RHEA-COMP:9953"/>
        <dbReference type="ChEBI" id="CHEBI:15378"/>
        <dbReference type="ChEBI" id="CHEBI:57453"/>
        <dbReference type="ChEBI" id="CHEBI:78530"/>
        <dbReference type="ChEBI" id="CHEBI:78844"/>
        <dbReference type="ChEBI" id="CHEBI:195366"/>
        <dbReference type="EC" id="2.1.2.9"/>
    </reaction>
</comment>
<comment type="similarity">
    <text evidence="1">Belongs to the Fmt family.</text>
</comment>
<protein>
    <recommendedName>
        <fullName evidence="1">Methionyl-tRNA formyltransferase</fullName>
        <ecNumber evidence="1">2.1.2.9</ecNumber>
    </recommendedName>
</protein>